<accession>P14421</accession>
<proteinExistence type="evidence at protein level"/>
<feature type="chain" id="PRO_0000161599" description="Neutral phospholipase A2 agkistrodotoxin">
    <location>
        <begin position="1"/>
        <end position="122"/>
    </location>
</feature>
<feature type="active site" evidence="8">
    <location>
        <position position="47"/>
    </location>
</feature>
<feature type="active site" evidence="8">
    <location>
        <position position="89"/>
    </location>
</feature>
<feature type="binding site" evidence="3 10">
    <location>
        <position position="27"/>
    </location>
    <ligand>
        <name>Ca(2+)</name>
        <dbReference type="ChEBI" id="CHEBI:29108"/>
    </ligand>
</feature>
<feature type="binding site" evidence="3 10">
    <location>
        <position position="29"/>
    </location>
    <ligand>
        <name>Ca(2+)</name>
        <dbReference type="ChEBI" id="CHEBI:29108"/>
    </ligand>
</feature>
<feature type="binding site" evidence="3 10">
    <location>
        <position position="31"/>
    </location>
    <ligand>
        <name>Ca(2+)</name>
        <dbReference type="ChEBI" id="CHEBI:29108"/>
    </ligand>
</feature>
<feature type="binding site" evidence="3 10">
    <location>
        <position position="48"/>
    </location>
    <ligand>
        <name>Ca(2+)</name>
        <dbReference type="ChEBI" id="CHEBI:29108"/>
    </ligand>
</feature>
<feature type="disulfide bond" evidence="3 5 9 10">
    <location>
        <begin position="26"/>
        <end position="115"/>
    </location>
</feature>
<feature type="disulfide bond" evidence="3 5 9 10">
    <location>
        <begin position="28"/>
        <end position="44"/>
    </location>
</feature>
<feature type="disulfide bond" evidence="3 5 9 10">
    <location>
        <begin position="43"/>
        <end position="95"/>
    </location>
</feature>
<feature type="disulfide bond" evidence="3 5 9 10">
    <location>
        <begin position="49"/>
        <end position="122"/>
    </location>
</feature>
<feature type="disulfide bond" evidence="3 5 9 10">
    <location>
        <begin position="50"/>
        <end position="88"/>
    </location>
</feature>
<feature type="disulfide bond" evidence="3 5 9 10">
    <location>
        <begin position="57"/>
        <end position="81"/>
    </location>
</feature>
<feature type="disulfide bond" evidence="3 5 9 10">
    <location>
        <begin position="75"/>
        <end position="86"/>
    </location>
</feature>
<feature type="sequence conflict" description="In Ref. 2; AA sequence." evidence="6" ref="2">
    <original>G</original>
    <variation>W</variation>
    <location>
        <position position="30"/>
    </location>
</feature>
<feature type="helix" evidence="11">
    <location>
        <begin position="2"/>
        <end position="13"/>
    </location>
</feature>
<feature type="turn" evidence="11">
    <location>
        <begin position="18"/>
        <end position="22"/>
    </location>
</feature>
<feature type="turn" evidence="11">
    <location>
        <begin position="25"/>
        <end position="27"/>
    </location>
</feature>
<feature type="strand" evidence="11">
    <location>
        <begin position="28"/>
        <end position="30"/>
    </location>
</feature>
<feature type="helix" evidence="11">
    <location>
        <begin position="39"/>
        <end position="53"/>
    </location>
</feature>
<feature type="turn" evidence="11">
    <location>
        <begin position="59"/>
        <end position="61"/>
    </location>
</feature>
<feature type="strand" evidence="12">
    <location>
        <begin position="66"/>
        <end position="68"/>
    </location>
</feature>
<feature type="strand" evidence="12">
    <location>
        <begin position="71"/>
        <end position="75"/>
    </location>
</feature>
<feature type="helix" evidence="11">
    <location>
        <begin position="80"/>
        <end position="99"/>
    </location>
</feature>
<feature type="helix" evidence="11">
    <location>
        <begin position="100"/>
        <end position="102"/>
    </location>
</feature>
<feature type="helix" evidence="11">
    <location>
        <begin position="105"/>
        <end position="107"/>
    </location>
</feature>
<feature type="helix" evidence="12">
    <location>
        <begin position="112"/>
        <end position="114"/>
    </location>
</feature>
<evidence type="ECO:0000255" key="1">
    <source>
        <dbReference type="PROSITE-ProRule" id="PRU10035"/>
    </source>
</evidence>
<evidence type="ECO:0000255" key="2">
    <source>
        <dbReference type="PROSITE-ProRule" id="PRU10036"/>
    </source>
</evidence>
<evidence type="ECO:0000269" key="3">
    <source>
    </source>
</evidence>
<evidence type="ECO:0000269" key="4">
    <source>
    </source>
</evidence>
<evidence type="ECO:0000269" key="5">
    <source>
    </source>
</evidence>
<evidence type="ECO:0000305" key="6"/>
<evidence type="ECO:0000305" key="7">
    <source>
    </source>
</evidence>
<evidence type="ECO:0000305" key="8">
    <source>
    </source>
</evidence>
<evidence type="ECO:0007744" key="9">
    <source>
        <dbReference type="PDB" id="1A2A"/>
    </source>
</evidence>
<evidence type="ECO:0007744" key="10">
    <source>
        <dbReference type="PDB" id="1BJJ"/>
    </source>
</evidence>
<evidence type="ECO:0007829" key="11">
    <source>
        <dbReference type="PDB" id="1A2A"/>
    </source>
</evidence>
<evidence type="ECO:0007829" key="12">
    <source>
        <dbReference type="PDB" id="1BJJ"/>
    </source>
</evidence>
<comment type="function">
    <text evidence="4">Snake venom phospholipase A2 (PLA2) that inhibits neuromuscular transmission by blocking acetylcholine release from the nerve termini. PLA2 catalyzes the calcium-dependent hydrolysis of the 2-acyl groups in 3-sn-phosphoglycerides.</text>
</comment>
<comment type="catalytic activity">
    <reaction evidence="1 2">
        <text>a 1,2-diacyl-sn-glycero-3-phosphocholine + H2O = a 1-acyl-sn-glycero-3-phosphocholine + a fatty acid + H(+)</text>
        <dbReference type="Rhea" id="RHEA:15801"/>
        <dbReference type="ChEBI" id="CHEBI:15377"/>
        <dbReference type="ChEBI" id="CHEBI:15378"/>
        <dbReference type="ChEBI" id="CHEBI:28868"/>
        <dbReference type="ChEBI" id="CHEBI:57643"/>
        <dbReference type="ChEBI" id="CHEBI:58168"/>
        <dbReference type="EC" id="3.1.1.4"/>
    </reaction>
</comment>
<comment type="cofactor">
    <cofactor evidence="7">
        <name>Ca(2+)</name>
        <dbReference type="ChEBI" id="CHEBI:29108"/>
    </cofactor>
    <text evidence="7">Binds 1 Ca(2+) ion.</text>
</comment>
<comment type="subcellular location">
    <subcellularLocation>
        <location>Secreted</location>
    </subcellularLocation>
</comment>
<comment type="tissue specificity">
    <text>Expressed by the venom gland.</text>
</comment>
<comment type="mass spectrometry" mass="13938.0" method="Electrospray" evidence="4"/>
<comment type="similarity">
    <text evidence="6">Belongs to the phospholipase A2 family. Group II subfamily. D49 sub-subfamily.</text>
</comment>
<organism>
    <name type="scientific">Gloydius halys</name>
    <name type="common">Chinese water mocassin</name>
    <name type="synonym">Agkistrodon halys</name>
    <dbReference type="NCBI Taxonomy" id="8714"/>
    <lineage>
        <taxon>Eukaryota</taxon>
        <taxon>Metazoa</taxon>
        <taxon>Chordata</taxon>
        <taxon>Craniata</taxon>
        <taxon>Vertebrata</taxon>
        <taxon>Euteleostomi</taxon>
        <taxon>Lepidosauria</taxon>
        <taxon>Squamata</taxon>
        <taxon>Bifurcata</taxon>
        <taxon>Unidentata</taxon>
        <taxon>Episquamata</taxon>
        <taxon>Toxicofera</taxon>
        <taxon>Serpentes</taxon>
        <taxon>Colubroidea</taxon>
        <taxon>Viperidae</taxon>
        <taxon>Crotalinae</taxon>
        <taxon>Gloydius</taxon>
    </lineage>
</organism>
<dbReference type="EC" id="3.1.1.4"/>
<dbReference type="PIR" id="C26279">
    <property type="entry name" value="C26279"/>
</dbReference>
<dbReference type="PIR" id="JX0063">
    <property type="entry name" value="JX0063"/>
</dbReference>
<dbReference type="PDB" id="1A2A">
    <property type="method" value="X-ray"/>
    <property type="resolution" value="2.80 A"/>
    <property type="chains" value="A/B/C/D/E/F/G/H=1-122"/>
</dbReference>
<dbReference type="PDB" id="1BJJ">
    <property type="method" value="X-ray"/>
    <property type="resolution" value="2.80 A"/>
    <property type="chains" value="A/B/C/D/E/F=1-122"/>
</dbReference>
<dbReference type="PDBsum" id="1A2A"/>
<dbReference type="PDBsum" id="1BJJ"/>
<dbReference type="SMR" id="P14421"/>
<dbReference type="EvolutionaryTrace" id="P14421"/>
<dbReference type="GO" id="GO:0005576">
    <property type="term" value="C:extracellular region"/>
    <property type="evidence" value="ECO:0007669"/>
    <property type="project" value="UniProtKB-SubCell"/>
</dbReference>
<dbReference type="GO" id="GO:0005509">
    <property type="term" value="F:calcium ion binding"/>
    <property type="evidence" value="ECO:0007669"/>
    <property type="project" value="InterPro"/>
</dbReference>
<dbReference type="GO" id="GO:0047498">
    <property type="term" value="F:calcium-dependent phospholipase A2 activity"/>
    <property type="evidence" value="ECO:0007669"/>
    <property type="project" value="TreeGrafter"/>
</dbReference>
<dbReference type="GO" id="GO:0005543">
    <property type="term" value="F:phospholipid binding"/>
    <property type="evidence" value="ECO:0007669"/>
    <property type="project" value="TreeGrafter"/>
</dbReference>
<dbReference type="GO" id="GO:0090729">
    <property type="term" value="F:toxin activity"/>
    <property type="evidence" value="ECO:0007669"/>
    <property type="project" value="UniProtKB-KW"/>
</dbReference>
<dbReference type="GO" id="GO:0050482">
    <property type="term" value="P:arachidonate secretion"/>
    <property type="evidence" value="ECO:0007669"/>
    <property type="project" value="InterPro"/>
</dbReference>
<dbReference type="GO" id="GO:0016042">
    <property type="term" value="P:lipid catabolic process"/>
    <property type="evidence" value="ECO:0007669"/>
    <property type="project" value="UniProtKB-KW"/>
</dbReference>
<dbReference type="GO" id="GO:0042130">
    <property type="term" value="P:negative regulation of T cell proliferation"/>
    <property type="evidence" value="ECO:0007669"/>
    <property type="project" value="TreeGrafter"/>
</dbReference>
<dbReference type="GO" id="GO:0006644">
    <property type="term" value="P:phospholipid metabolic process"/>
    <property type="evidence" value="ECO:0007669"/>
    <property type="project" value="InterPro"/>
</dbReference>
<dbReference type="CDD" id="cd00125">
    <property type="entry name" value="PLA2c"/>
    <property type="match status" value="1"/>
</dbReference>
<dbReference type="FunFam" id="1.20.90.10:FF:000001">
    <property type="entry name" value="Basic phospholipase A2 homolog"/>
    <property type="match status" value="1"/>
</dbReference>
<dbReference type="Gene3D" id="1.20.90.10">
    <property type="entry name" value="Phospholipase A2 domain"/>
    <property type="match status" value="1"/>
</dbReference>
<dbReference type="InterPro" id="IPR001211">
    <property type="entry name" value="PLipase_A2"/>
</dbReference>
<dbReference type="InterPro" id="IPR033112">
    <property type="entry name" value="PLipase_A2_Asp_AS"/>
</dbReference>
<dbReference type="InterPro" id="IPR016090">
    <property type="entry name" value="PLipase_A2_dom"/>
</dbReference>
<dbReference type="InterPro" id="IPR036444">
    <property type="entry name" value="PLipase_A2_dom_sf"/>
</dbReference>
<dbReference type="InterPro" id="IPR033113">
    <property type="entry name" value="PLipase_A2_His_AS"/>
</dbReference>
<dbReference type="PANTHER" id="PTHR11716">
    <property type="entry name" value="PHOSPHOLIPASE A2 FAMILY MEMBER"/>
    <property type="match status" value="1"/>
</dbReference>
<dbReference type="PANTHER" id="PTHR11716:SF9">
    <property type="entry name" value="PHOSPHOLIPASE A2, MEMBRANE ASSOCIATED"/>
    <property type="match status" value="1"/>
</dbReference>
<dbReference type="Pfam" id="PF00068">
    <property type="entry name" value="Phospholip_A2_1"/>
    <property type="match status" value="1"/>
</dbReference>
<dbReference type="PRINTS" id="PR00389">
    <property type="entry name" value="PHPHLIPASEA2"/>
</dbReference>
<dbReference type="SMART" id="SM00085">
    <property type="entry name" value="PA2c"/>
    <property type="match status" value="1"/>
</dbReference>
<dbReference type="SUPFAM" id="SSF48619">
    <property type="entry name" value="Phospholipase A2, PLA2"/>
    <property type="match status" value="1"/>
</dbReference>
<dbReference type="PROSITE" id="PS00119">
    <property type="entry name" value="PA2_ASP"/>
    <property type="match status" value="1"/>
</dbReference>
<dbReference type="PROSITE" id="PS00118">
    <property type="entry name" value="PA2_HIS"/>
    <property type="match status" value="1"/>
</dbReference>
<keyword id="KW-0002">3D-structure</keyword>
<keyword id="KW-0106">Calcium</keyword>
<keyword id="KW-0903">Direct protein sequencing</keyword>
<keyword id="KW-1015">Disulfide bond</keyword>
<keyword id="KW-0378">Hydrolase</keyword>
<keyword id="KW-0442">Lipid degradation</keyword>
<keyword id="KW-0443">Lipid metabolism</keyword>
<keyword id="KW-0479">Metal-binding</keyword>
<keyword id="KW-0528">Neurotoxin</keyword>
<keyword id="KW-0638">Presynaptic neurotoxin</keyword>
<keyword id="KW-0964">Secreted</keyword>
<keyword id="KW-0800">Toxin</keyword>
<reference key="1">
    <citation type="journal article" date="1989" name="J. Biochem.">
        <title>Amino acid sequence of a presynaptic neurotoxin, agkistrodotoxin, from the venom of Agkistrodon halys pallas.</title>
        <authorList>
            <person name="Kondo K."/>
            <person name="Zhang J.-K."/>
            <person name="Xu K."/>
            <person name="Kagamiyama H."/>
        </authorList>
    </citation>
    <scope>PROTEIN SEQUENCE</scope>
    <source>
        <tissue>Venom</tissue>
    </source>
</reference>
<reference key="2">
    <citation type="journal article" date="1987" name="Toxicon">
        <title>Characterization of the structure and function of three phospholipases A2 from the venom of Agkistrodon halys pallas.</title>
        <authorList>
            <person name="Chen Y.-C."/>
            <person name="Maraganore J.M."/>
            <person name="Reardon I."/>
            <person name="Heinrikson R.L."/>
        </authorList>
    </citation>
    <scope>PROTEIN SEQUENCE OF 1-52</scope>
    <source>
        <tissue>Venom</tissue>
    </source>
</reference>
<reference key="3">
    <citation type="journal article" date="2004" name="Biochem. J.">
        <title>Molecular evolution and structure-function relationships of crotoxin-like and asparagine-6-containing phospholipases A2 in pit viper venoms.</title>
        <authorList>
            <person name="Chen Y.-H."/>
            <person name="Wang Y.-M."/>
            <person name="Hseu M.-J."/>
            <person name="Tsai I.-H."/>
        </authorList>
    </citation>
    <scope>PROTEIN SEQUENCE OF 1-23</scope>
    <scope>FUNCTION</scope>
    <scope>MASS SPECTROMETRY</scope>
    <source>
        <tissue>Venom</tissue>
    </source>
</reference>
<reference key="4">
    <citation type="journal article" date="1998" name="J. Mol. Biol.">
        <title>Crystal structure of agkistrodotoxin, a phospholipase A2-type presynaptic neurotoxin from Agkistrodon halys pallas.</title>
        <authorList>
            <person name="Tang L."/>
            <person name="Zhou Y.-C."/>
            <person name="Lin Z.-J."/>
        </authorList>
    </citation>
    <scope>X-RAY CRYSTALLOGRAPHY (2.8 ANGSTROMS)</scope>
    <scope>DISULFIDE BONDS</scope>
</reference>
<reference key="5">
    <citation type="journal article" date="1999" name="Acta Crystallogr. D">
        <title>Structure of agkistrodotoxin in an orthorhombic crystal form with six molecules per asymmetric unit.</title>
        <authorList>
            <person name="Tang L."/>
            <person name="Zhou Y.C."/>
            <person name="Lin Z.J."/>
        </authorList>
    </citation>
    <scope>X-RAY CRYSTALLOGRAPHY (2.80 ANGSTROMS) IN COMPLEX WITH CALCIUM ION</scope>
    <scope>COFACTOR</scope>
    <scope>DISULFIDE BONDS</scope>
</reference>
<name>PA2N_GLOHA</name>
<sequence length="122" mass="13869">NLLQFNKMIKEETGKNAIPFYAFYGCYCGGGGQGKPKDGTDRCCFVHDCCYGRLVNCNTKSDIYSYSLKEGYITCGKGTNCEEQICECDRVAAECFRRNLDTYNNGYMFYRDSKCTETSEEC</sequence>
<protein>
    <recommendedName>
        <fullName>Neutral phospholipase A2 agkistrodotoxin</fullName>
        <shortName>AGTX</shortName>
        <shortName>ATX</shortName>
        <shortName>svPLA2</shortName>
        <ecNumber>3.1.1.4</ecNumber>
    </recommendedName>
    <alternativeName>
        <fullName>Phosphatidylcholine 2-acylhydrolase</fullName>
    </alternativeName>
</protein>